<evidence type="ECO:0000250" key="1"/>
<evidence type="ECO:0000255" key="2">
    <source>
        <dbReference type="PROSITE-ProRule" id="PRU00326"/>
    </source>
</evidence>
<evidence type="ECO:0000256" key="3">
    <source>
        <dbReference type="SAM" id="MobiDB-lite"/>
    </source>
</evidence>
<evidence type="ECO:0000269" key="4">
    <source>
    </source>
</evidence>
<evidence type="ECO:0000269" key="5">
    <source>
    </source>
</evidence>
<evidence type="ECO:0000269" key="6">
    <source>
    </source>
</evidence>
<evidence type="ECO:0000269" key="7">
    <source>
    </source>
</evidence>
<evidence type="ECO:0000269" key="8">
    <source>
    </source>
</evidence>
<evidence type="ECO:0000269" key="9">
    <source>
    </source>
</evidence>
<evidence type="ECO:0000305" key="10"/>
<gene>
    <name type="primary">ARF3</name>
    <name type="synonym">ETT</name>
    <name type="ordered locus">At2g33860</name>
    <name type="ORF">T1B8.30</name>
</gene>
<accession>O23661</accession>
<accession>O23670</accession>
<accession>O81087</accession>
<accession>Q33DU9</accession>
<organism>
    <name type="scientific">Arabidopsis thaliana</name>
    <name type="common">Mouse-ear cress</name>
    <dbReference type="NCBI Taxonomy" id="3702"/>
    <lineage>
        <taxon>Eukaryota</taxon>
        <taxon>Viridiplantae</taxon>
        <taxon>Streptophyta</taxon>
        <taxon>Embryophyta</taxon>
        <taxon>Tracheophyta</taxon>
        <taxon>Spermatophyta</taxon>
        <taxon>Magnoliopsida</taxon>
        <taxon>eudicotyledons</taxon>
        <taxon>Gunneridae</taxon>
        <taxon>Pentapetalae</taxon>
        <taxon>rosids</taxon>
        <taxon>malvids</taxon>
        <taxon>Brassicales</taxon>
        <taxon>Brassicaceae</taxon>
        <taxon>Camelineae</taxon>
        <taxon>Arabidopsis</taxon>
    </lineage>
</organism>
<reference key="1">
    <citation type="journal article" date="1997" name="Science">
        <title>ARF1, a transcription factor that binds to auxin response elements.</title>
        <authorList>
            <person name="Ulmasov T."/>
            <person name="Hagen G."/>
            <person name="Guilfoyle T.J."/>
        </authorList>
    </citation>
    <scope>NUCLEOTIDE SEQUENCE [MRNA]</scope>
    <source>
        <strain>cv. Columbia</strain>
    </source>
</reference>
<reference key="2">
    <citation type="journal article" date="1997" name="Development">
        <title>ETTIN patterns the Arabidopsis floral meristem and reproductive organs.</title>
        <authorList>
            <person name="Sessions A."/>
            <person name="Nemhauser J.L."/>
            <person name="McCall A."/>
            <person name="Roe J.L."/>
            <person name="Feldmann K.A."/>
            <person name="Zambryski P.C."/>
        </authorList>
    </citation>
    <scope>NUCLEOTIDE SEQUENCE [GENOMIC DNA]</scope>
    <scope>CHARACTERIZATION</scope>
    <scope>TISSUE SPECIFICITY</scope>
    <source>
        <strain>cv. Wassilewskija</strain>
    </source>
</reference>
<reference key="3">
    <citation type="journal article" date="1999" name="Nature">
        <title>Sequence and analysis of chromosome 2 of the plant Arabidopsis thaliana.</title>
        <authorList>
            <person name="Lin X."/>
            <person name="Kaul S."/>
            <person name="Rounsley S.D."/>
            <person name="Shea T.P."/>
            <person name="Benito M.-I."/>
            <person name="Town C.D."/>
            <person name="Fujii C.Y."/>
            <person name="Mason T.M."/>
            <person name="Bowman C.L."/>
            <person name="Barnstead M.E."/>
            <person name="Feldblyum T.V."/>
            <person name="Buell C.R."/>
            <person name="Ketchum K.A."/>
            <person name="Lee J.J."/>
            <person name="Ronning C.M."/>
            <person name="Koo H.L."/>
            <person name="Moffat K.S."/>
            <person name="Cronin L.A."/>
            <person name="Shen M."/>
            <person name="Pai G."/>
            <person name="Van Aken S."/>
            <person name="Umayam L."/>
            <person name="Tallon L.J."/>
            <person name="Gill J.E."/>
            <person name="Adams M.D."/>
            <person name="Carrera A.J."/>
            <person name="Creasy T.H."/>
            <person name="Goodman H.M."/>
            <person name="Somerville C.R."/>
            <person name="Copenhaver G.P."/>
            <person name="Preuss D."/>
            <person name="Nierman W.C."/>
            <person name="White O."/>
            <person name="Eisen J.A."/>
            <person name="Salzberg S.L."/>
            <person name="Fraser C.M."/>
            <person name="Venter J.C."/>
        </authorList>
    </citation>
    <scope>NUCLEOTIDE SEQUENCE [LARGE SCALE GENOMIC DNA]</scope>
    <source>
        <strain>cv. Columbia</strain>
    </source>
</reference>
<reference key="4">
    <citation type="journal article" date="2017" name="Plant J.">
        <title>Araport11: a complete reannotation of the Arabidopsis thaliana reference genome.</title>
        <authorList>
            <person name="Cheng C.Y."/>
            <person name="Krishnakumar V."/>
            <person name="Chan A.P."/>
            <person name="Thibaud-Nissen F."/>
            <person name="Schobel S."/>
            <person name="Town C.D."/>
        </authorList>
    </citation>
    <scope>GENOME REANNOTATION</scope>
    <source>
        <strain>cv. Columbia</strain>
    </source>
</reference>
<reference key="5">
    <citation type="journal article" date="2003" name="Science">
        <title>Empirical analysis of transcriptional activity in the Arabidopsis genome.</title>
        <authorList>
            <person name="Yamada K."/>
            <person name="Lim J."/>
            <person name="Dale J.M."/>
            <person name="Chen H."/>
            <person name="Shinn P."/>
            <person name="Palm C.J."/>
            <person name="Southwick A.M."/>
            <person name="Wu H.C."/>
            <person name="Kim C.J."/>
            <person name="Nguyen M."/>
            <person name="Pham P.K."/>
            <person name="Cheuk R.F."/>
            <person name="Karlin-Newmann G."/>
            <person name="Liu S.X."/>
            <person name="Lam B."/>
            <person name="Sakano H."/>
            <person name="Wu T."/>
            <person name="Yu G."/>
            <person name="Miranda M."/>
            <person name="Quach H.L."/>
            <person name="Tripp M."/>
            <person name="Chang C.H."/>
            <person name="Lee J.M."/>
            <person name="Toriumi M.J."/>
            <person name="Chan M.M."/>
            <person name="Tang C.C."/>
            <person name="Onodera C.S."/>
            <person name="Deng J.M."/>
            <person name="Akiyama K."/>
            <person name="Ansari Y."/>
            <person name="Arakawa T."/>
            <person name="Banh J."/>
            <person name="Banno F."/>
            <person name="Bowser L."/>
            <person name="Brooks S.Y."/>
            <person name="Carninci P."/>
            <person name="Chao Q."/>
            <person name="Choy N."/>
            <person name="Enju A."/>
            <person name="Goldsmith A.D."/>
            <person name="Gurjal M."/>
            <person name="Hansen N.F."/>
            <person name="Hayashizaki Y."/>
            <person name="Johnson-Hopson C."/>
            <person name="Hsuan V.W."/>
            <person name="Iida K."/>
            <person name="Karnes M."/>
            <person name="Khan S."/>
            <person name="Koesema E."/>
            <person name="Ishida J."/>
            <person name="Jiang P.X."/>
            <person name="Jones T."/>
            <person name="Kawai J."/>
            <person name="Kamiya A."/>
            <person name="Meyers C."/>
            <person name="Nakajima M."/>
            <person name="Narusaka M."/>
            <person name="Seki M."/>
            <person name="Sakurai T."/>
            <person name="Satou M."/>
            <person name="Tamse R."/>
            <person name="Vaysberg M."/>
            <person name="Wallender E.K."/>
            <person name="Wong C."/>
            <person name="Yamamura Y."/>
            <person name="Yuan S."/>
            <person name="Shinozaki K."/>
            <person name="Davis R.W."/>
            <person name="Theologis A."/>
            <person name="Ecker J.R."/>
        </authorList>
    </citation>
    <scope>NUCLEOTIDE SEQUENCE [LARGE SCALE MRNA]</scope>
    <source>
        <strain>cv. Columbia</strain>
    </source>
</reference>
<reference key="6">
    <citation type="journal article" date="2005" name="Plant Cell">
        <title>The Arabidopsis STV1 protein, responsible for translation reinitiation, is required for auxin-mediated gynoecium patterning.</title>
        <authorList>
            <person name="Nishimura T."/>
            <person name="Wada T."/>
            <person name="Yamamoto K.T."/>
            <person name="Okada K."/>
        </authorList>
    </citation>
    <scope>NUCLEOTIDE SEQUENCE [MRNA] OF 10-109</scope>
    <source>
        <strain>cv. Columbia</strain>
    </source>
</reference>
<reference key="7">
    <citation type="journal article" date="1999" name="Plant J.">
        <title>Dimerization and DNA binding of auxin response factors.</title>
        <authorList>
            <person name="Ulmasov T."/>
            <person name="Hagen G."/>
            <person name="Guilfoyle T.J."/>
        </authorList>
    </citation>
    <scope>DIMERIZATION</scope>
    <scope>TISSUE SPECIFICITY</scope>
</reference>
<reference key="8">
    <citation type="journal article" date="2000" name="Development">
        <title>Auxin and ETTIN in Arabidopsis gynoecium morphogenesis.</title>
        <authorList>
            <person name="Nemhauser J.L."/>
            <person name="Feldman L.J."/>
            <person name="Zambryski P.C."/>
        </authorList>
    </citation>
    <scope>FUNCTION</scope>
</reference>
<reference key="9">
    <citation type="journal article" date="2002" name="Plant Mol. Biol.">
        <title>Auxin-responsive gene expression: genes, promoters and regulatory factors.</title>
        <authorList>
            <person name="Hagen G."/>
            <person name="Guilfoyle T.J."/>
        </authorList>
    </citation>
    <scope>GENE FAMILY</scope>
    <scope>NOMENCLATURE</scope>
    <scope>FUNCTION</scope>
</reference>
<reference key="10">
    <citation type="journal article" date="2008" name="Trends Plant Sci.">
        <title>The plant B3 superfamily.</title>
        <authorList>
            <person name="Swaminathan K."/>
            <person name="Peterson K."/>
            <person name="Jack T."/>
        </authorList>
    </citation>
    <scope>GENE FAMILY</scope>
</reference>
<reference key="11">
    <citation type="journal article" date="2009" name="PLoS Biol.">
        <title>AGAMOUS controls GIANT KILLER, a multifunctional chromatin modifier in reproductive organ patterning and differentiation.</title>
        <authorList>
            <person name="Ng K.H."/>
            <person name="Yu H."/>
            <person name="Ito T."/>
        </authorList>
    </citation>
    <scope>INDUCTION</scope>
</reference>
<reference key="12">
    <citation type="journal article" date="2016" name="Biol. Open">
        <title>A genetic link between epigenetic repressor AS1-AS2 and a putative small subunit processome in leaf polarity establishment of Arabidopsis.</title>
        <authorList>
            <person name="Matsumura Y."/>
            <person name="Ohbayashi I."/>
            <person name="Takahashi H."/>
            <person name="Kojima S."/>
            <person name="Ishibashi N."/>
            <person name="Keta S."/>
            <person name="Nakagawa A."/>
            <person name="Hayashi R."/>
            <person name="Saez-Vasquez J."/>
            <person name="Echeverria M."/>
            <person name="Sugiyama M."/>
            <person name="Nakamura K."/>
            <person name="Machida C."/>
            <person name="Machida Y."/>
        </authorList>
    </citation>
    <scope>DISRUPTION PHENOTYPE</scope>
</reference>
<keyword id="KW-0927">Auxin signaling pathway</keyword>
<keyword id="KW-0217">Developmental protein</keyword>
<keyword id="KW-0238">DNA-binding</keyword>
<keyword id="KW-0539">Nucleus</keyword>
<keyword id="KW-1185">Reference proteome</keyword>
<keyword id="KW-0804">Transcription</keyword>
<keyword id="KW-0805">Transcription regulation</keyword>
<sequence length="608" mass="66606">MGGLIDLNVMETEEDETQTQTPSSASGSVSPTSSSSASVSVVSSNSAGGGVCLELWHACAGPLISLPKRGSLVLYFPQGHLEQAPDFSAAIYGLPPHVFCRILDVKLHAETTTDEVYAQVSLLPESEDIERKVREGIIDVDGGEEDYEVLKRSNTPHMFCKTLTASDTSTHGGFSVPRRAAEDCFPPLDYSQPRPSQELLARDLHGLEWRFRHIYRGQPRRHLLTTGWSAFVNKKKLVSGDAVLFLRGDDGKLRLGVRRASQIEGTAALSAQYNQNMNHNNFSEVAHAISTHSVFSISYNPKASWSNFIIPAPKFLKVVDYPFCIGMRFKARVESEDASERRSPGIISGISDLDPIRWPGSKWRCLLVRWDDIVANGHQQRVSPWEIEPSGSISNSGSFVTTGPKRSRIGFSSGKPDIPVSEGIRATDFEESLRFQRVLQGQEIFPGFINTCSDGGAGARRGRFKGTEFGDSYGFHKVLQGQETVPAYSITDHRQQHGLSQRNIWCGPFQNFSTRILPPSVSSSPSSVLLTNSNSPNGRLEDHHGGSGRCRLFGFPLTDETTAVASATAVPCVEGNSMKGASAVQSNHHHSQGRDIYAMRDMLLDIAL</sequence>
<dbReference type="EMBL" id="U89296">
    <property type="protein sequence ID" value="AAB62404.1"/>
    <property type="molecule type" value="mRNA"/>
</dbReference>
<dbReference type="EMBL" id="AF007788">
    <property type="protein sequence ID" value="AAC23589.1"/>
    <property type="molecule type" value="Genomic_DNA"/>
</dbReference>
<dbReference type="EMBL" id="U78721">
    <property type="protein sequence ID" value="AAC69148.1"/>
    <property type="molecule type" value="Genomic_DNA"/>
</dbReference>
<dbReference type="EMBL" id="CP002685">
    <property type="protein sequence ID" value="AEC08900.1"/>
    <property type="molecule type" value="Genomic_DNA"/>
</dbReference>
<dbReference type="EMBL" id="AF336917">
    <property type="protein sequence ID" value="AAG53998.1"/>
    <property type="molecule type" value="mRNA"/>
</dbReference>
<dbReference type="EMBL" id="AF360313">
    <property type="protein sequence ID" value="AAK26023.1"/>
    <property type="molecule type" value="mRNA"/>
</dbReference>
<dbReference type="EMBL" id="AY056365">
    <property type="protein sequence ID" value="AAL07251.1"/>
    <property type="molecule type" value="mRNA"/>
</dbReference>
<dbReference type="EMBL" id="AB199791">
    <property type="protein sequence ID" value="BAE48151.1"/>
    <property type="molecule type" value="mRNA"/>
</dbReference>
<dbReference type="PIR" id="E84750">
    <property type="entry name" value="E84750"/>
</dbReference>
<dbReference type="PIR" id="T03278">
    <property type="entry name" value="T03278"/>
</dbReference>
<dbReference type="RefSeq" id="NP_180942.1">
    <property type="nucleotide sequence ID" value="NM_128946.4"/>
</dbReference>
<dbReference type="SMR" id="O23661"/>
<dbReference type="BioGRID" id="3303">
    <property type="interactions" value="32"/>
</dbReference>
<dbReference type="FunCoup" id="O23661">
    <property type="interactions" value="1116"/>
</dbReference>
<dbReference type="IntAct" id="O23661">
    <property type="interactions" value="22"/>
</dbReference>
<dbReference type="STRING" id="3702.O23661"/>
<dbReference type="GlyGen" id="O23661">
    <property type="glycosylation" value="1 site"/>
</dbReference>
<dbReference type="iPTMnet" id="O23661"/>
<dbReference type="PaxDb" id="3702-AT2G33860.1"/>
<dbReference type="ProteomicsDB" id="241022"/>
<dbReference type="EnsemblPlants" id="AT2G33860.1">
    <property type="protein sequence ID" value="AT2G33860.1"/>
    <property type="gene ID" value="AT2G33860"/>
</dbReference>
<dbReference type="GeneID" id="817956"/>
<dbReference type="Gramene" id="AT2G33860.1">
    <property type="protein sequence ID" value="AT2G33860.1"/>
    <property type="gene ID" value="AT2G33860"/>
</dbReference>
<dbReference type="KEGG" id="ath:AT2G33860"/>
<dbReference type="Araport" id="AT2G33860"/>
<dbReference type="TAIR" id="AT2G33860">
    <property type="gene designation" value="ETT"/>
</dbReference>
<dbReference type="eggNOG" id="ENOG502QQSY">
    <property type="taxonomic scope" value="Eukaryota"/>
</dbReference>
<dbReference type="HOGENOM" id="CLU_002626_2_2_1"/>
<dbReference type="InParanoid" id="O23661"/>
<dbReference type="OMA" id="AYSMTDH"/>
<dbReference type="OrthoDB" id="624437at2759"/>
<dbReference type="PhylomeDB" id="O23661"/>
<dbReference type="PRO" id="PR:O23661"/>
<dbReference type="Proteomes" id="UP000006548">
    <property type="component" value="Chromosome 2"/>
</dbReference>
<dbReference type="ExpressionAtlas" id="O23661">
    <property type="expression patterns" value="baseline and differential"/>
</dbReference>
<dbReference type="GO" id="GO:0005634">
    <property type="term" value="C:nucleus"/>
    <property type="evidence" value="ECO:0000314"/>
    <property type="project" value="TAIR"/>
</dbReference>
<dbReference type="GO" id="GO:0031490">
    <property type="term" value="F:chromatin DNA binding"/>
    <property type="evidence" value="ECO:0000353"/>
    <property type="project" value="TAIR"/>
</dbReference>
<dbReference type="GO" id="GO:0003677">
    <property type="term" value="F:DNA binding"/>
    <property type="evidence" value="ECO:0000250"/>
    <property type="project" value="TAIR"/>
</dbReference>
<dbReference type="GO" id="GO:0003700">
    <property type="term" value="F:DNA-binding transcription factor activity"/>
    <property type="evidence" value="ECO:0000314"/>
    <property type="project" value="TAIR"/>
</dbReference>
<dbReference type="GO" id="GO:0140677">
    <property type="term" value="F:molecular function activator activity"/>
    <property type="evidence" value="ECO:0000353"/>
    <property type="project" value="DisProt"/>
</dbReference>
<dbReference type="GO" id="GO:0036094">
    <property type="term" value="F:small molecule binding"/>
    <property type="evidence" value="ECO:0000315"/>
    <property type="project" value="DisProt"/>
</dbReference>
<dbReference type="GO" id="GO:0000976">
    <property type="term" value="F:transcription cis-regulatory region binding"/>
    <property type="evidence" value="ECO:0000353"/>
    <property type="project" value="TAIR"/>
</dbReference>
<dbReference type="GO" id="GO:0010158">
    <property type="term" value="P:abaxial cell fate specification"/>
    <property type="evidence" value="ECO:0000316"/>
    <property type="project" value="TAIR"/>
</dbReference>
<dbReference type="GO" id="GO:0009850">
    <property type="term" value="P:auxin metabolic process"/>
    <property type="evidence" value="ECO:0000304"/>
    <property type="project" value="TAIR"/>
</dbReference>
<dbReference type="GO" id="GO:0009734">
    <property type="term" value="P:auxin-activated signaling pathway"/>
    <property type="evidence" value="ECO:0007669"/>
    <property type="project" value="UniProtKB-KW"/>
</dbReference>
<dbReference type="GO" id="GO:0010582">
    <property type="term" value="P:floral meristem determinacy"/>
    <property type="evidence" value="ECO:0000315"/>
    <property type="project" value="TAIR"/>
</dbReference>
<dbReference type="GO" id="GO:1902584">
    <property type="term" value="P:positive regulation of response to water deprivation"/>
    <property type="evidence" value="ECO:0000315"/>
    <property type="project" value="TAIR"/>
</dbReference>
<dbReference type="GO" id="GO:0009733">
    <property type="term" value="P:response to auxin"/>
    <property type="evidence" value="ECO:0000250"/>
    <property type="project" value="TAIR"/>
</dbReference>
<dbReference type="GO" id="GO:0010050">
    <property type="term" value="P:vegetative phase change"/>
    <property type="evidence" value="ECO:0000315"/>
    <property type="project" value="TAIR"/>
</dbReference>
<dbReference type="CDD" id="cd10017">
    <property type="entry name" value="B3_DNA"/>
    <property type="match status" value="1"/>
</dbReference>
<dbReference type="DisProt" id="DP02380"/>
<dbReference type="FunFam" id="2.30.30.1040:FF:000001">
    <property type="entry name" value="Auxin response factor"/>
    <property type="match status" value="1"/>
</dbReference>
<dbReference type="FunFam" id="2.40.330.10:FF:000001">
    <property type="entry name" value="Auxin response factor"/>
    <property type="match status" value="1"/>
</dbReference>
<dbReference type="Gene3D" id="2.30.30.1040">
    <property type="match status" value="1"/>
</dbReference>
<dbReference type="Gene3D" id="2.40.330.10">
    <property type="entry name" value="DNA-binding pseudobarrel domain"/>
    <property type="match status" value="1"/>
</dbReference>
<dbReference type="InterPro" id="IPR010525">
    <property type="entry name" value="ARF_dom"/>
</dbReference>
<dbReference type="InterPro" id="IPR044835">
    <property type="entry name" value="ARF_plant"/>
</dbReference>
<dbReference type="InterPro" id="IPR003340">
    <property type="entry name" value="B3_DNA-bd"/>
</dbReference>
<dbReference type="InterPro" id="IPR015300">
    <property type="entry name" value="DNA-bd_pseudobarrel_sf"/>
</dbReference>
<dbReference type="PANTHER" id="PTHR31384:SF5">
    <property type="entry name" value="AUXIN RESPONSE FACTOR 3"/>
    <property type="match status" value="1"/>
</dbReference>
<dbReference type="PANTHER" id="PTHR31384">
    <property type="entry name" value="AUXIN RESPONSE FACTOR 4-RELATED"/>
    <property type="match status" value="1"/>
</dbReference>
<dbReference type="Pfam" id="PF06507">
    <property type="entry name" value="ARF_AD"/>
    <property type="match status" value="1"/>
</dbReference>
<dbReference type="Pfam" id="PF02362">
    <property type="entry name" value="B3"/>
    <property type="match status" value="1"/>
</dbReference>
<dbReference type="SMART" id="SM01019">
    <property type="entry name" value="B3"/>
    <property type="match status" value="1"/>
</dbReference>
<dbReference type="SUPFAM" id="SSF101936">
    <property type="entry name" value="DNA-binding pseudobarrel domain"/>
    <property type="match status" value="1"/>
</dbReference>
<dbReference type="PROSITE" id="PS50863">
    <property type="entry name" value="B3"/>
    <property type="match status" value="1"/>
</dbReference>
<comment type="function">
    <text evidence="5 6">Auxin response factors (ARFs) are transcriptional factors that bind specifically to the DNA sequence 5'-TGTCTC-3' found in the auxin-responsive promoter elements (AuxREs). Could act as transcriptional activator or repressor. Formation of heterodimers with Aux/IAA proteins may alter their ability to modulate early auxin response genes expression. Involved in the establishment or elaboration of tissue patterning during gynoecial development.</text>
</comment>
<comment type="subunit">
    <text evidence="1">Homo and heterodimers.</text>
</comment>
<comment type="interaction">
    <interactant intactId="EBI-3946474">
        <id>O23661</id>
    </interactant>
    <interactant intactId="EBI-4433406">
        <id>Q9SA94</id>
        <label>At1g11810</label>
    </interactant>
    <organismsDiffer>false</organismsDiffer>
    <experiments>3</experiments>
</comment>
<comment type="interaction">
    <interactant intactId="EBI-3946474">
        <id>O23661</id>
    </interactant>
    <interactant intactId="EBI-25521402">
        <id>Q9FFR5</id>
        <label>GLXI-LIKE</label>
    </interactant>
    <organismsDiffer>false</organismsDiffer>
    <experiments>3</experiments>
</comment>
<comment type="subcellular location">
    <subcellularLocation>
        <location>Nucleus</location>
    </subcellularLocation>
</comment>
<comment type="tissue specificity">
    <text evidence="4 9">Expressed in the whole plant.</text>
</comment>
<comment type="developmental stage">
    <text>Detected during gynoecium development.</text>
</comment>
<comment type="induction">
    <text evidence="7">Negatively regulated by AHL21/GIK.</text>
</comment>
<comment type="disruption phenotype">
    <text evidence="8">Double mutations in this protein and in ARF4 protein significantly suppresses the adaxial development defect of leaves of the AS2 and RH10 proteins double mutant at high temperatures.</text>
</comment>
<comment type="similarity">
    <text evidence="10">Belongs to the ARF family.</text>
</comment>
<protein>
    <recommendedName>
        <fullName>Auxin response factor 3</fullName>
    </recommendedName>
    <alternativeName>
        <fullName>Protein ETTIN</fullName>
    </alternativeName>
</protein>
<proteinExistence type="evidence at protein level"/>
<feature type="chain" id="PRO_0000111507" description="Auxin response factor 3">
    <location>
        <begin position="1"/>
        <end position="608"/>
    </location>
</feature>
<feature type="DNA-binding region" description="TF-B3" evidence="2">
    <location>
        <begin position="159"/>
        <end position="261"/>
    </location>
</feature>
<feature type="region of interest" description="Disordered" evidence="3">
    <location>
        <begin position="1"/>
        <end position="40"/>
    </location>
</feature>
<feature type="compositionally biased region" description="Low complexity" evidence="3">
    <location>
        <begin position="18"/>
        <end position="40"/>
    </location>
</feature>
<feature type="sequence conflict" description="In Ref. 2; AAC23589." evidence="10" ref="2">
    <original>F</original>
    <variation>I</variation>
    <location>
        <position position="411"/>
    </location>
</feature>
<feature type="sequence conflict" description="In Ref. 1; AAB62404." evidence="10" ref="1">
    <original>L</original>
    <variation>F</variation>
    <location>
        <position position="530"/>
    </location>
</feature>
<name>ARFC_ARATH</name>